<evidence type="ECO:0000250" key="1"/>
<evidence type="ECO:0000255" key="2"/>
<evidence type="ECO:0000256" key="3">
    <source>
        <dbReference type="SAM" id="MobiDB-lite"/>
    </source>
</evidence>
<evidence type="ECO:0000305" key="4"/>
<proteinExistence type="inferred from homology"/>
<comment type="function">
    <text evidence="1">In epithelial cells, the heterodimer gE/gI is required for the cell-to-cell spread of the virus, by sorting nascent virions to cell junctions. Once the virus reaches the cell junctions, virus particles can spread to adjacent cells extremely rapidly through interactions with cellular receptors that accumulate at these junctions. Implicated in basolateral spread in polarized cells. In neuronal cells, gE/gI is essential for the anterograde spread of the infection throughout the host nervous system. Together with US9, the heterodimer gE/gI is involved in the sorting and transport of viral structural components toward axon tips (By similarity).</text>
</comment>
<comment type="subunit">
    <text evidence="1">Interacts with gI.</text>
</comment>
<comment type="subcellular location">
    <subcellularLocation>
        <location evidence="1">Virion membrane</location>
        <topology evidence="1">Single-pass type I membrane protein</topology>
    </subcellularLocation>
    <subcellularLocation>
        <location evidence="1">Host cell membrane</location>
        <topology evidence="1">Single-pass type I membrane protein</topology>
    </subcellularLocation>
    <subcellularLocation>
        <location evidence="1">Host cell junction</location>
    </subcellularLocation>
    <subcellularLocation>
        <location evidence="1">Host Golgi apparatus membrane</location>
        <topology evidence="1">Single-pass membrane protein</topology>
    </subcellularLocation>
    <subcellularLocation>
        <location evidence="1">Host endosome membrane</location>
        <topology evidence="1">Single-pass membrane protein</topology>
    </subcellularLocation>
    <text evidence="1">During virion morphogenesis, this protein probably accumulates in the endosomes and trans-Golgi where secondary envelopment occurs. It is probably transported to the cell surface from where it is endocytosed and directed to the trans-Golgi network (TGN), maybe through an interaction with PACS-1 sorting protein. The heterodimer gE/gI then redistributes to cell junctions to promote cell-cell spread later in the infection (By similarity).</text>
</comment>
<comment type="PTM">
    <text evidence="4">Phosphorylated on serines within the acidic cluster. Phosphorylation determines whether endocytosed viral gE traffics to the trans-Golgi network or recycles to the cell membrane.</text>
</comment>
<comment type="similarity">
    <text evidence="4">Belongs to the alphaherpesvirinae glycoprotein E family.</text>
</comment>
<organismHost>
    <name type="scientific">Macaca fascicularis</name>
    <name type="common">Crab-eating macaque</name>
    <name type="synonym">Cynomolgus monkey</name>
    <dbReference type="NCBI Taxonomy" id="9541"/>
</organismHost>
<organismHost>
    <name type="scientific">Macaca mulatta</name>
    <name type="common">Rhesus macaque</name>
    <dbReference type="NCBI Taxonomy" id="9544"/>
</organismHost>
<organismHost>
    <name type="scientific">Macaca nemestrina</name>
    <name type="common">Pig-tailed macaque</name>
    <dbReference type="NCBI Taxonomy" id="9545"/>
</organismHost>
<accession>P30816</accession>
<accession>Q8V722</accession>
<reference key="1">
    <citation type="journal article" date="2002" name="J. Virol.">
        <title>Sequence and genetic arrangement of the U(S) region of the monkey B virus (cercopithecine herpesvirus 1) genome and comparison with the U(S) regions of other primate herpesviruses.</title>
        <authorList>
            <person name="Ohsawa K."/>
            <person name="Black D.H."/>
            <person name="Sato H."/>
            <person name="Eberle R."/>
        </authorList>
    </citation>
    <scope>NUCLEOTIDE SEQUENCE [GENOMIC DNA]</scope>
    <source>
        <strain>E2490</strain>
    </source>
</reference>
<reference key="2">
    <citation type="journal article" date="2003" name="J. Virol.">
        <title>Complete sequence and comparative analysis of the genome of herpes B virus (Cercopithecine herpesvirus 1) from a rhesus monkey.</title>
        <authorList>
            <person name="Perelygina L."/>
            <person name="Zhu L."/>
            <person name="Zurkuhlen H."/>
            <person name="Mills R."/>
            <person name="Borodovsky M."/>
            <person name="Hilliard J.K."/>
        </authorList>
    </citation>
    <scope>NUCLEOTIDE SEQUENCE [LARGE SCALE GENOMIC DNA]</scope>
    <source>
        <strain>E2490</strain>
    </source>
</reference>
<reference key="3">
    <citation type="journal article" date="1992" name="J. Gen. Virol.">
        <title>Nucleotide sequence analysis of a homologue of herpes simplex virus type 1 gene US9 found in the genome of simian herpes B virus.</title>
        <authorList>
            <person name="Killeen A.M."/>
            <person name="Harrington L."/>
            <person name="Wall L.V.M."/>
            <person name="Kelly D.C."/>
        </authorList>
    </citation>
    <scope>NUCLEOTIDE SEQUENCE [GENOMIC DNA] OF 467-539</scope>
</reference>
<gene>
    <name type="primary">gE</name>
    <name type="ORF">US8</name>
</gene>
<organism>
    <name type="scientific">Cercopithecine herpesvirus 1 (strain E2490)</name>
    <name type="common">CeHV-1</name>
    <name type="synonym">Simian herpes B virus</name>
    <dbReference type="NCBI Taxonomy" id="260965"/>
    <lineage>
        <taxon>Viruses</taxon>
        <taxon>Duplodnaviria</taxon>
        <taxon>Heunggongvirae</taxon>
        <taxon>Peploviricota</taxon>
        <taxon>Herviviricetes</taxon>
        <taxon>Herpesvirales</taxon>
        <taxon>Orthoherpesviridae</taxon>
        <taxon>Alphaherpesvirinae</taxon>
        <taxon>Simplexvirus</taxon>
        <taxon>Simplexvirus macacinealpha1</taxon>
        <taxon>Cercopithecine herpesvirus 1</taxon>
    </lineage>
</organism>
<feature type="signal peptide" evidence="2">
    <location>
        <begin position="1"/>
        <end position="24"/>
    </location>
</feature>
<feature type="chain" id="PRO_0000115765" description="Envelope glycoprotein E">
    <location>
        <begin position="25"/>
        <end position="539"/>
    </location>
</feature>
<feature type="topological domain" description="Virion surface" evidence="2">
    <location>
        <begin position="25"/>
        <end position="410"/>
    </location>
</feature>
<feature type="transmembrane region" description="Helical" evidence="2">
    <location>
        <begin position="411"/>
        <end position="431"/>
    </location>
</feature>
<feature type="topological domain" description="Intravirion" evidence="2">
    <location>
        <begin position="432"/>
        <end position="539"/>
    </location>
</feature>
<feature type="region of interest" description="Interaction with gI" evidence="1">
    <location>
        <begin position="66"/>
        <end position="91"/>
    </location>
</feature>
<feature type="region of interest" description="Disordered" evidence="3">
    <location>
        <begin position="168"/>
        <end position="203"/>
    </location>
</feature>
<feature type="region of interest" description="Disordered" evidence="3">
    <location>
        <begin position="378"/>
        <end position="404"/>
    </location>
</feature>
<feature type="region of interest" description="Disordered" evidence="3">
    <location>
        <begin position="466"/>
        <end position="497"/>
    </location>
</feature>
<feature type="region of interest" description="Acidic" evidence="1">
    <location>
        <begin position="468"/>
        <end position="480"/>
    </location>
</feature>
<feature type="region of interest" description="Disordered" evidence="3">
    <location>
        <begin position="517"/>
        <end position="539"/>
    </location>
</feature>
<feature type="short sequence motif" description="Internalization motif" evidence="2">
    <location>
        <begin position="452"/>
        <end position="455"/>
    </location>
</feature>
<feature type="compositionally biased region" description="Basic and acidic residues" evidence="3">
    <location>
        <begin position="520"/>
        <end position="531"/>
    </location>
</feature>
<feature type="disulfide bond" evidence="1">
    <location>
        <begin position="262"/>
        <end position="288"/>
    </location>
</feature>
<feature type="disulfide bond" evidence="1">
    <location>
        <begin position="271"/>
        <end position="280"/>
    </location>
</feature>
<feature type="disulfide bond" evidence="1">
    <location>
        <begin position="305"/>
        <end position="314"/>
    </location>
</feature>
<sequence>MRPPVRASLGLLVAWAIGACVCAAAIETTWKHASAGDEVRLFALPAARPGAPPAKVVWELDPMAACGSLRPSWVSLRPPGQVLDTVVDAECVSEPVLLAAWYERRDGGSEVPAPFWGPDGAPPQRGNVTNGTLVLREARVGDSGMHVLSVFHPPNATAARHVVFLKVAPRRPEPAGGTPPPRDDEEGGTEEPATPAPPPHPHPIAEVAHVRGVTVSLRTQTAILFAPGDTVHTDVSVMPIAHDDDPYVMEVVWVRFDVPEECGEMRIYEPCLYHPQLPECRSPADAPCAASVWTERLAVRRYGPCSRGVPPPRCPSDAAMESRAGLGWYGHTVNLQLRDASEASGGLYVCVVYVNGHVHAWGHVVISTASRYRNAVVERSPPRYRPPPVEPTPSAQPTGPRPAAPRAARLVGVLGAAVGLAVAGLSVWACVTCRRARAWRAVKRRDLMAPTYIRLADDELYGDLSSYGDSDDSEYDSDSDRLPGTDPAPKRGSGFQILSGAKADPWSAGARQHGHLITFRADDTSRYRDPSSPDPPHRR</sequence>
<protein>
    <recommendedName>
        <fullName>Envelope glycoprotein E</fullName>
        <shortName>gE</shortName>
    </recommendedName>
</protein>
<dbReference type="EMBL" id="AB074432">
    <property type="protein sequence ID" value="BAB83755.1"/>
    <property type="molecule type" value="Genomic_DNA"/>
</dbReference>
<dbReference type="EMBL" id="AF533768">
    <property type="protein sequence ID" value="AAP41485.1"/>
    <property type="molecule type" value="Genomic_DNA"/>
</dbReference>
<dbReference type="EMBL" id="S75996">
    <property type="protein sequence ID" value="AAB21001.1"/>
    <property type="status" value="ALT_SEQ"/>
    <property type="molecule type" value="Genomic_DNA"/>
</dbReference>
<dbReference type="PIR" id="PQ0277">
    <property type="entry name" value="PQ0277"/>
</dbReference>
<dbReference type="RefSeq" id="NP_851927.1">
    <property type="nucleotide sequence ID" value="NC_004812.1"/>
</dbReference>
<dbReference type="SMR" id="P30816"/>
<dbReference type="GeneID" id="1487461"/>
<dbReference type="KEGG" id="vg:1487461"/>
<dbReference type="OrthoDB" id="11660at10239"/>
<dbReference type="Proteomes" id="UP000110594">
    <property type="component" value="Segment"/>
</dbReference>
<dbReference type="GO" id="GO:0044175">
    <property type="term" value="C:host cell endosome membrane"/>
    <property type="evidence" value="ECO:0007669"/>
    <property type="project" value="UniProtKB-SubCell"/>
</dbReference>
<dbReference type="GO" id="GO:0044178">
    <property type="term" value="C:host cell Golgi membrane"/>
    <property type="evidence" value="ECO:0007669"/>
    <property type="project" value="UniProtKB-SubCell"/>
</dbReference>
<dbReference type="GO" id="GO:0044156">
    <property type="term" value="C:host cell junction"/>
    <property type="evidence" value="ECO:0007669"/>
    <property type="project" value="UniProtKB-SubCell"/>
</dbReference>
<dbReference type="GO" id="GO:0016020">
    <property type="term" value="C:membrane"/>
    <property type="evidence" value="ECO:0007669"/>
    <property type="project" value="UniProtKB-KW"/>
</dbReference>
<dbReference type="GO" id="GO:0019031">
    <property type="term" value="C:viral envelope"/>
    <property type="evidence" value="ECO:0007669"/>
    <property type="project" value="UniProtKB-KW"/>
</dbReference>
<dbReference type="GO" id="GO:0055036">
    <property type="term" value="C:virion membrane"/>
    <property type="evidence" value="ECO:0007669"/>
    <property type="project" value="UniProtKB-SubCell"/>
</dbReference>
<dbReference type="Gene3D" id="2.60.40.10">
    <property type="entry name" value="Immunoglobulins"/>
    <property type="match status" value="1"/>
</dbReference>
<dbReference type="InterPro" id="IPR046463">
    <property type="entry name" value="Herpes_gE_N"/>
</dbReference>
<dbReference type="InterPro" id="IPR003404">
    <property type="entry name" value="Herpes_glycopE_Fc"/>
</dbReference>
<dbReference type="InterPro" id="IPR036179">
    <property type="entry name" value="Ig-like_dom_sf"/>
</dbReference>
<dbReference type="InterPro" id="IPR013783">
    <property type="entry name" value="Ig-like_fold"/>
</dbReference>
<dbReference type="Pfam" id="PF02480">
    <property type="entry name" value="Herpes_gE"/>
    <property type="match status" value="1"/>
</dbReference>
<dbReference type="Pfam" id="PF20418">
    <property type="entry name" value="Herpes_gE_N"/>
    <property type="match status" value="1"/>
</dbReference>
<dbReference type="SUPFAM" id="SSF48726">
    <property type="entry name" value="Immunoglobulin"/>
    <property type="match status" value="1"/>
</dbReference>
<keyword id="KW-1015">Disulfide bond</keyword>
<keyword id="KW-0325">Glycoprotein</keyword>
<keyword id="KW-1031">Host cell junction</keyword>
<keyword id="KW-1032">Host cell membrane</keyword>
<keyword id="KW-1039">Host endosome</keyword>
<keyword id="KW-1040">Host Golgi apparatus</keyword>
<keyword id="KW-1043">Host membrane</keyword>
<keyword id="KW-0472">Membrane</keyword>
<keyword id="KW-1185">Reference proteome</keyword>
<keyword id="KW-0732">Signal</keyword>
<keyword id="KW-0812">Transmembrane</keyword>
<keyword id="KW-1133">Transmembrane helix</keyword>
<keyword id="KW-0261">Viral envelope protein</keyword>
<keyword id="KW-0946">Virion</keyword>
<name>GE_CHV1E</name>